<proteinExistence type="inferred from homology"/>
<organism>
    <name type="scientific">Staphylococcus aureus (strain Mu50 / ATCC 700699)</name>
    <dbReference type="NCBI Taxonomy" id="158878"/>
    <lineage>
        <taxon>Bacteria</taxon>
        <taxon>Bacillati</taxon>
        <taxon>Bacillota</taxon>
        <taxon>Bacilli</taxon>
        <taxon>Bacillales</taxon>
        <taxon>Staphylococcaceae</taxon>
        <taxon>Staphylococcus</taxon>
    </lineage>
</organism>
<gene>
    <name type="ordered locus">SAV1751</name>
</gene>
<accession>Q7A2R1</accession>
<sequence>MWKEKVQQYEDQIINDLKGLLAIESVRDDAKASEDAPVGPGPRKALDYMYEIAHRDGFTTHDVDHIAGRIEAGKGNDVLGILCHVDVVPAGDGWDSNPFEPVVTEDAIIARGTLDDKGPTIAAYYAIKILEDMNVDWKKRIHMIIGTDEESDWKCTDRYFKTEEMPTLGFAPDAEFPCIHGEKGITTFDLVQNKLTEDQDEPDYELITFKSGERYNMVPDHAEARVLVKENMTDVIQDFEYFLEQNHLQGDSTVDSGILVLTVEGKAVHGMDPSIGVNAGLYLLKFLASLNLDNNAQAFVAFSNRYLFNSDFGEKMGMKFHTDVMGDVTTNIGVITYDNENAGLFGINLRYPEGFEFEKAMDRFANEIQQYGFEVKLGKVQPPHYVDKNDPFVQKLVTAYRNQTNDMTEPYTIGGGTYARNLDKGVAFGAMFSDSEDLMHQKNEYITKKQLFNATSIYLEAIYSLCVEE</sequence>
<name>PEPVL_STAAM</name>
<evidence type="ECO:0000250" key="1"/>
<evidence type="ECO:0000305" key="2"/>
<reference key="1">
    <citation type="journal article" date="2001" name="Lancet">
        <title>Whole genome sequencing of meticillin-resistant Staphylococcus aureus.</title>
        <authorList>
            <person name="Kuroda M."/>
            <person name="Ohta T."/>
            <person name="Uchiyama I."/>
            <person name="Baba T."/>
            <person name="Yuzawa H."/>
            <person name="Kobayashi I."/>
            <person name="Cui L."/>
            <person name="Oguchi A."/>
            <person name="Aoki K."/>
            <person name="Nagai Y."/>
            <person name="Lian J.-Q."/>
            <person name="Ito T."/>
            <person name="Kanamori M."/>
            <person name="Matsumaru H."/>
            <person name="Maruyama A."/>
            <person name="Murakami H."/>
            <person name="Hosoyama A."/>
            <person name="Mizutani-Ui Y."/>
            <person name="Takahashi N.K."/>
            <person name="Sawano T."/>
            <person name="Inoue R."/>
            <person name="Kaito C."/>
            <person name="Sekimizu K."/>
            <person name="Hirakawa H."/>
            <person name="Kuhara S."/>
            <person name="Goto S."/>
            <person name="Yabuzaki J."/>
            <person name="Kanehisa M."/>
            <person name="Yamashita A."/>
            <person name="Oshima K."/>
            <person name="Furuya K."/>
            <person name="Yoshino C."/>
            <person name="Shiba T."/>
            <person name="Hattori M."/>
            <person name="Ogasawara N."/>
            <person name="Hayashi H."/>
            <person name="Hiramatsu K."/>
        </authorList>
    </citation>
    <scope>NUCLEOTIDE SEQUENCE [LARGE SCALE GENOMIC DNA]</scope>
    <source>
        <strain>Mu50 / ATCC 700699</strain>
    </source>
</reference>
<feature type="chain" id="PRO_0000282629" description="Putative dipeptidase SAV1751">
    <location>
        <begin position="1"/>
        <end position="469"/>
    </location>
</feature>
<feature type="active site" evidence="1">
    <location>
        <position position="86"/>
    </location>
</feature>
<feature type="active site" description="Proton acceptor" evidence="1">
    <location>
        <position position="149"/>
    </location>
</feature>
<feature type="binding site" evidence="1">
    <location>
        <position position="84"/>
    </location>
    <ligand>
        <name>Zn(2+)</name>
        <dbReference type="ChEBI" id="CHEBI:29105"/>
        <label>2</label>
    </ligand>
</feature>
<feature type="binding site" evidence="1">
    <location>
        <position position="115"/>
    </location>
    <ligand>
        <name>Zn(2+)</name>
        <dbReference type="ChEBI" id="CHEBI:29105"/>
        <label>1</label>
    </ligand>
</feature>
<feature type="binding site" evidence="1">
    <location>
        <position position="115"/>
    </location>
    <ligand>
        <name>Zn(2+)</name>
        <dbReference type="ChEBI" id="CHEBI:29105"/>
        <label>2</label>
    </ligand>
</feature>
<feature type="binding site" evidence="1">
    <location>
        <position position="150"/>
    </location>
    <ligand>
        <name>Zn(2+)</name>
        <dbReference type="ChEBI" id="CHEBI:29105"/>
        <label>1</label>
    </ligand>
</feature>
<feature type="binding site" evidence="1">
    <location>
        <position position="173"/>
    </location>
    <ligand>
        <name>Zn(2+)</name>
        <dbReference type="ChEBI" id="CHEBI:29105"/>
        <label>2</label>
    </ligand>
</feature>
<feature type="binding site" evidence="1">
    <location>
        <position position="440"/>
    </location>
    <ligand>
        <name>Zn(2+)</name>
        <dbReference type="ChEBI" id="CHEBI:29105"/>
        <label>1</label>
    </ligand>
</feature>
<protein>
    <recommendedName>
        <fullName>Putative dipeptidase SAV1751</fullName>
        <ecNumber>3.4.13.-</ecNumber>
    </recommendedName>
</protein>
<dbReference type="EC" id="3.4.13.-"/>
<dbReference type="EMBL" id="BA000017">
    <property type="protein sequence ID" value="BAB57913.1"/>
    <property type="molecule type" value="Genomic_DNA"/>
</dbReference>
<dbReference type="SMR" id="Q7A2R1"/>
<dbReference type="KEGG" id="sav:SAV1751"/>
<dbReference type="HOGENOM" id="CLU_031786_2_0_9"/>
<dbReference type="PhylomeDB" id="Q7A2R1"/>
<dbReference type="Proteomes" id="UP000002481">
    <property type="component" value="Chromosome"/>
</dbReference>
<dbReference type="GO" id="GO:0008777">
    <property type="term" value="F:acetylornithine deacetylase activity"/>
    <property type="evidence" value="ECO:0007669"/>
    <property type="project" value="TreeGrafter"/>
</dbReference>
<dbReference type="GO" id="GO:0016805">
    <property type="term" value="F:dipeptidase activity"/>
    <property type="evidence" value="ECO:0007669"/>
    <property type="project" value="UniProtKB-KW"/>
</dbReference>
<dbReference type="GO" id="GO:0008237">
    <property type="term" value="F:metallopeptidase activity"/>
    <property type="evidence" value="ECO:0007669"/>
    <property type="project" value="UniProtKB-KW"/>
</dbReference>
<dbReference type="GO" id="GO:0008270">
    <property type="term" value="F:zinc ion binding"/>
    <property type="evidence" value="ECO:0007669"/>
    <property type="project" value="InterPro"/>
</dbReference>
<dbReference type="GO" id="GO:0006526">
    <property type="term" value="P:L-arginine biosynthetic process"/>
    <property type="evidence" value="ECO:0007669"/>
    <property type="project" value="TreeGrafter"/>
</dbReference>
<dbReference type="GO" id="GO:0006508">
    <property type="term" value="P:proteolysis"/>
    <property type="evidence" value="ECO:0007669"/>
    <property type="project" value="UniProtKB-KW"/>
</dbReference>
<dbReference type="CDD" id="cd03888">
    <property type="entry name" value="M20_PepV"/>
    <property type="match status" value="1"/>
</dbReference>
<dbReference type="Gene3D" id="3.30.70.360">
    <property type="match status" value="2"/>
</dbReference>
<dbReference type="Gene3D" id="3.40.630.10">
    <property type="entry name" value="Zn peptidases"/>
    <property type="match status" value="1"/>
</dbReference>
<dbReference type="InterPro" id="IPR036264">
    <property type="entry name" value="Bact_exopeptidase_dim_dom"/>
</dbReference>
<dbReference type="InterPro" id="IPR010964">
    <property type="entry name" value="M20A_pepV-rel"/>
</dbReference>
<dbReference type="InterPro" id="IPR002933">
    <property type="entry name" value="Peptidase_M20"/>
</dbReference>
<dbReference type="InterPro" id="IPR050072">
    <property type="entry name" value="Peptidase_M20A"/>
</dbReference>
<dbReference type="NCBIfam" id="TIGR01887">
    <property type="entry name" value="dipeptidaselike"/>
    <property type="match status" value="1"/>
</dbReference>
<dbReference type="NCBIfam" id="NF005591">
    <property type="entry name" value="PRK07318.1"/>
    <property type="match status" value="1"/>
</dbReference>
<dbReference type="PANTHER" id="PTHR43808">
    <property type="entry name" value="ACETYLORNITHINE DEACETYLASE"/>
    <property type="match status" value="1"/>
</dbReference>
<dbReference type="PANTHER" id="PTHR43808:SF31">
    <property type="entry name" value="N-ACETYL-L-CITRULLINE DEACETYLASE"/>
    <property type="match status" value="1"/>
</dbReference>
<dbReference type="Pfam" id="PF01546">
    <property type="entry name" value="Peptidase_M20"/>
    <property type="match status" value="1"/>
</dbReference>
<dbReference type="SUPFAM" id="SSF55031">
    <property type="entry name" value="Bacterial exopeptidase dimerisation domain"/>
    <property type="match status" value="1"/>
</dbReference>
<dbReference type="SUPFAM" id="SSF53187">
    <property type="entry name" value="Zn-dependent exopeptidases"/>
    <property type="match status" value="1"/>
</dbReference>
<comment type="cofactor">
    <cofactor evidence="1">
        <name>Zn(2+)</name>
        <dbReference type="ChEBI" id="CHEBI:29105"/>
    </cofactor>
    <text evidence="1">Binds 2 Zn(2+) ions per subunit.</text>
</comment>
<comment type="similarity">
    <text evidence="2">Belongs to the peptidase M20A family.</text>
</comment>
<keyword id="KW-0224">Dipeptidase</keyword>
<keyword id="KW-0378">Hydrolase</keyword>
<keyword id="KW-0479">Metal-binding</keyword>
<keyword id="KW-0482">Metalloprotease</keyword>
<keyword id="KW-0645">Protease</keyword>
<keyword id="KW-0862">Zinc</keyword>